<comment type="function">
    <text evidence="1">Component of the eukaryotic translation initiation factor 3 (eIF-3) complex, which is involved in protein synthesis of a specialized repertoire of mRNAs and, together with other initiation factors, stimulates binding of mRNA and methionyl-tRNAi to the 40S ribosome. The eIF-3 complex specifically targets and initiates translation of a subset of mRNAs involved in cell proliferation.</text>
</comment>
<comment type="subunit">
    <text evidence="1">Component of the eukaryotic translation initiation factor 3 (eIF-3) complex.</text>
</comment>
<comment type="subcellular location">
    <subcellularLocation>
        <location evidence="1">Cytoplasm</location>
    </subcellularLocation>
</comment>
<comment type="similarity">
    <text evidence="1">Belongs to the eIF-3 subunit C family.</text>
</comment>
<evidence type="ECO:0000255" key="1">
    <source>
        <dbReference type="HAMAP-Rule" id="MF_03002"/>
    </source>
</evidence>
<evidence type="ECO:0000255" key="2">
    <source>
        <dbReference type="PROSITE-ProRule" id="PRU01185"/>
    </source>
</evidence>
<evidence type="ECO:0000256" key="3">
    <source>
        <dbReference type="SAM" id="MobiDB-lite"/>
    </source>
</evidence>
<dbReference type="EMBL" id="CH445327">
    <property type="protein sequence ID" value="EAT90351.1"/>
    <property type="molecule type" value="Genomic_DNA"/>
</dbReference>
<dbReference type="RefSeq" id="XP_001792757.1">
    <property type="nucleotide sequence ID" value="XM_001792705.1"/>
</dbReference>
<dbReference type="SMR" id="Q0V1H5"/>
<dbReference type="FunCoup" id="Q0V1H5">
    <property type="interactions" value="1094"/>
</dbReference>
<dbReference type="STRING" id="321614.Q0V1H5"/>
<dbReference type="EnsemblFungi" id="SNOT_02139">
    <property type="protein sequence ID" value="SNOT_02139"/>
    <property type="gene ID" value="SNOG_02139"/>
</dbReference>
<dbReference type="GeneID" id="5969607"/>
<dbReference type="KEGG" id="pno:SNOG_02139"/>
<dbReference type="VEuPathDB" id="FungiDB:JI435_021390"/>
<dbReference type="eggNOG" id="KOG1076">
    <property type="taxonomic scope" value="Eukaryota"/>
</dbReference>
<dbReference type="HOGENOM" id="CLU_004304_0_2_1"/>
<dbReference type="InParanoid" id="Q0V1H5"/>
<dbReference type="OMA" id="FRCGLIK"/>
<dbReference type="OrthoDB" id="29647at2759"/>
<dbReference type="Proteomes" id="UP000001055">
    <property type="component" value="Unassembled WGS sequence"/>
</dbReference>
<dbReference type="GO" id="GO:0016282">
    <property type="term" value="C:eukaryotic 43S preinitiation complex"/>
    <property type="evidence" value="ECO:0007669"/>
    <property type="project" value="UniProtKB-UniRule"/>
</dbReference>
<dbReference type="GO" id="GO:0033290">
    <property type="term" value="C:eukaryotic 48S preinitiation complex"/>
    <property type="evidence" value="ECO:0007669"/>
    <property type="project" value="UniProtKB-UniRule"/>
</dbReference>
<dbReference type="GO" id="GO:0005852">
    <property type="term" value="C:eukaryotic translation initiation factor 3 complex"/>
    <property type="evidence" value="ECO:0000318"/>
    <property type="project" value="GO_Central"/>
</dbReference>
<dbReference type="GO" id="GO:0071540">
    <property type="term" value="C:eukaryotic translation initiation factor 3 complex, eIF3e"/>
    <property type="evidence" value="ECO:0007669"/>
    <property type="project" value="EnsemblFungi"/>
</dbReference>
<dbReference type="GO" id="GO:0071541">
    <property type="term" value="C:eukaryotic translation initiation factor 3 complex, eIF3m"/>
    <property type="evidence" value="ECO:0007669"/>
    <property type="project" value="EnsemblFungi"/>
</dbReference>
<dbReference type="GO" id="GO:0003723">
    <property type="term" value="F:RNA binding"/>
    <property type="evidence" value="ECO:0007669"/>
    <property type="project" value="InterPro"/>
</dbReference>
<dbReference type="GO" id="GO:0003743">
    <property type="term" value="F:translation initiation factor activity"/>
    <property type="evidence" value="ECO:0007669"/>
    <property type="project" value="UniProtKB-UniRule"/>
</dbReference>
<dbReference type="GO" id="GO:0031369">
    <property type="term" value="F:translation initiation factor binding"/>
    <property type="evidence" value="ECO:0000318"/>
    <property type="project" value="GO_Central"/>
</dbReference>
<dbReference type="GO" id="GO:0001732">
    <property type="term" value="P:formation of cytoplasmic translation initiation complex"/>
    <property type="evidence" value="ECO:0007669"/>
    <property type="project" value="UniProtKB-UniRule"/>
</dbReference>
<dbReference type="GO" id="GO:0006413">
    <property type="term" value="P:translational initiation"/>
    <property type="evidence" value="ECO:0000318"/>
    <property type="project" value="GO_Central"/>
</dbReference>
<dbReference type="FunFam" id="1.10.10.10:FF:000300">
    <property type="entry name" value="Eukaryotic translation initiation factor 3 subunit C"/>
    <property type="match status" value="1"/>
</dbReference>
<dbReference type="Gene3D" id="1.10.10.10">
    <property type="entry name" value="Winged helix-like DNA-binding domain superfamily/Winged helix DNA-binding domain"/>
    <property type="match status" value="1"/>
</dbReference>
<dbReference type="HAMAP" id="MF_03002">
    <property type="entry name" value="eIF3c"/>
    <property type="match status" value="1"/>
</dbReference>
<dbReference type="InterPro" id="IPR027516">
    <property type="entry name" value="EIF3C"/>
</dbReference>
<dbReference type="InterPro" id="IPR008905">
    <property type="entry name" value="EIF3C_N_dom"/>
</dbReference>
<dbReference type="InterPro" id="IPR000717">
    <property type="entry name" value="PCI_dom"/>
</dbReference>
<dbReference type="InterPro" id="IPR036388">
    <property type="entry name" value="WH-like_DNA-bd_sf"/>
</dbReference>
<dbReference type="InterPro" id="IPR036390">
    <property type="entry name" value="WH_DNA-bd_sf"/>
</dbReference>
<dbReference type="PANTHER" id="PTHR13937">
    <property type="entry name" value="EUKARYOTIC TRANSLATION INITATION FACTOR 3, SUBUNIT 8 EIF3S8 -RELATED"/>
    <property type="match status" value="1"/>
</dbReference>
<dbReference type="PANTHER" id="PTHR13937:SF0">
    <property type="entry name" value="EUKARYOTIC TRANSLATION INITIATION FACTOR 3 SUBUNIT C-RELATED"/>
    <property type="match status" value="1"/>
</dbReference>
<dbReference type="Pfam" id="PF05470">
    <property type="entry name" value="eIF-3c_N"/>
    <property type="match status" value="1"/>
</dbReference>
<dbReference type="Pfam" id="PF01399">
    <property type="entry name" value="PCI"/>
    <property type="match status" value="1"/>
</dbReference>
<dbReference type="SMART" id="SM00088">
    <property type="entry name" value="PINT"/>
    <property type="match status" value="1"/>
</dbReference>
<dbReference type="SUPFAM" id="SSF46785">
    <property type="entry name" value="Winged helix' DNA-binding domain"/>
    <property type="match status" value="1"/>
</dbReference>
<dbReference type="PROSITE" id="PS50250">
    <property type="entry name" value="PCI"/>
    <property type="match status" value="1"/>
</dbReference>
<protein>
    <recommendedName>
        <fullName evidence="1">Eukaryotic translation initiation factor 3 subunit C</fullName>
        <shortName evidence="1">eIF3c</shortName>
    </recommendedName>
    <alternativeName>
        <fullName evidence="1">Eukaryotic translation initiation factor 3 93 kDa subunit homolog</fullName>
        <shortName evidence="1">eIF3 p93</shortName>
    </alternativeName>
    <alternativeName>
        <fullName evidence="1">Translation initiation factor eIF3, p93 subunit homolog</fullName>
    </alternativeName>
</protein>
<keyword id="KW-0963">Cytoplasm</keyword>
<keyword id="KW-0396">Initiation factor</keyword>
<keyword id="KW-0648">Protein biosynthesis</keyword>
<proteinExistence type="inferred from homology"/>
<name>EIF3C_PHANO</name>
<accession>Q0V1H5</accession>
<reference key="1">
    <citation type="journal article" date="2007" name="Plant Cell">
        <title>Dothideomycete-plant interactions illuminated by genome sequencing and EST analysis of the wheat pathogen Stagonospora nodorum.</title>
        <authorList>
            <person name="Hane J.K."/>
            <person name="Lowe R.G.T."/>
            <person name="Solomon P.S."/>
            <person name="Tan K.-C."/>
            <person name="Schoch C.L."/>
            <person name="Spatafora J.W."/>
            <person name="Crous P.W."/>
            <person name="Kodira C.D."/>
            <person name="Birren B.W."/>
            <person name="Galagan J.E."/>
            <person name="Torriani S.F.F."/>
            <person name="McDonald B.A."/>
            <person name="Oliver R.P."/>
        </authorList>
    </citation>
    <scope>NUCLEOTIDE SEQUENCE [LARGE SCALE GENOMIC DNA]</scope>
    <source>
        <strain>SN15 / ATCC MYA-4574 / FGSC 10173</strain>
    </source>
</reference>
<sequence length="853" mass="96545">MSRFFAASDSSSEESSEEELYSDNEASAQEDSDKDSDDDDSDDDDSSSGSEAGGANRFLKDADSDSESEDEDQNKVLKSAKDKRFDELEATIRLIENAQRINDWAVISDQFDKLNRQAPTLMKQNDGKVPKLYIQAIADLETVVLETHEKQKVTPKKMNAVNTRGFNAVRQKVKKHNREFQKDIDLYRENKDEFMRETEEVEAAPKEKKKKSKIPQLGTEIVDEATDDGFITVGAGGKAVQYTPEGILKHLRAIVEQRGRKNSDKLEHIRTLEKLFDVSVNDYQRIRVLLTLISTRFDLTSGTASHMHQDQWKLADQEFGKLLEILENTKEIVVIENAEEWEDDDKLPPIEEGQIFRIPGSVVSFVERLDDELTRSLQHIDPHTAEYVERLTDEALLYAQLVRALIYVESLKKNASLELPQESLNRVVMRRLEHVYFKPSQVVTIMEANSWKAVPETLDSEVTPRAISNDTTSLVQTLSTYLFQNSEGIIRARAMLCQIYFLALHDQYYKARDMMLMSHLQETISNFDVNTQILFNRALVQVGLCAFRAGLVYESQNSLQEICGSNRQKELLAQGLQMQRYSQISPEQERLERQRQLPFHMHINLELLECVYLTCSMLLEIPLLAQLGSSPDLRKRVISKTYRRLLEYHERQIFTGPPENTRDHVMQASKALSAGEWKKAAEFINSIKIWELVADSEKIKEMLSAQIQEEGLRTYLFTYAPYYDTLAVSTLASMFELSERKVSAVVSKMISHEELAAALDQVNSAIIFRKGVELSRLQTLALSLSDKASGLIESNEKTLEQRTQGTANAFERQGGRGGRGGGRGRGGGRGGGVPRGGRNQQFTGGALGRAIQA</sequence>
<organism>
    <name type="scientific">Phaeosphaeria nodorum (strain SN15 / ATCC MYA-4574 / FGSC 10173)</name>
    <name type="common">Glume blotch fungus</name>
    <name type="synonym">Parastagonospora nodorum</name>
    <dbReference type="NCBI Taxonomy" id="321614"/>
    <lineage>
        <taxon>Eukaryota</taxon>
        <taxon>Fungi</taxon>
        <taxon>Dikarya</taxon>
        <taxon>Ascomycota</taxon>
        <taxon>Pezizomycotina</taxon>
        <taxon>Dothideomycetes</taxon>
        <taxon>Pleosporomycetidae</taxon>
        <taxon>Pleosporales</taxon>
        <taxon>Pleosporineae</taxon>
        <taxon>Phaeosphaeriaceae</taxon>
        <taxon>Parastagonospora</taxon>
    </lineage>
</organism>
<feature type="chain" id="PRO_0000364288" description="Eukaryotic translation initiation factor 3 subunit C">
    <location>
        <begin position="1"/>
        <end position="853"/>
    </location>
</feature>
<feature type="domain" description="PCI" evidence="2">
    <location>
        <begin position="599"/>
        <end position="773"/>
    </location>
</feature>
<feature type="region of interest" description="Disordered" evidence="3">
    <location>
        <begin position="1"/>
        <end position="78"/>
    </location>
</feature>
<feature type="region of interest" description="Disordered" evidence="3">
    <location>
        <begin position="798"/>
        <end position="853"/>
    </location>
</feature>
<feature type="compositionally biased region" description="Acidic residues" evidence="3">
    <location>
        <begin position="11"/>
        <end position="46"/>
    </location>
</feature>
<feature type="compositionally biased region" description="Gly residues" evidence="3">
    <location>
        <begin position="815"/>
        <end position="835"/>
    </location>
</feature>
<gene>
    <name evidence="1" type="primary">NIP1</name>
    <name type="ORF">SNOG_02139</name>
</gene>